<dbReference type="EC" id="3.5.1.5" evidence="1"/>
<dbReference type="EMBL" id="CP000655">
    <property type="protein sequence ID" value="ABP34411.1"/>
    <property type="molecule type" value="Genomic_DNA"/>
</dbReference>
<dbReference type="RefSeq" id="WP_011903036.1">
    <property type="nucleotide sequence ID" value="NC_009379.1"/>
</dbReference>
<dbReference type="SMR" id="A4SY47"/>
<dbReference type="GeneID" id="31481582"/>
<dbReference type="KEGG" id="pnu:Pnuc_1196"/>
<dbReference type="eggNOG" id="COG0831">
    <property type="taxonomic scope" value="Bacteria"/>
</dbReference>
<dbReference type="HOGENOM" id="CLU_145825_1_0_4"/>
<dbReference type="UniPathway" id="UPA00258">
    <property type="reaction ID" value="UER00370"/>
</dbReference>
<dbReference type="Proteomes" id="UP000000231">
    <property type="component" value="Chromosome"/>
</dbReference>
<dbReference type="GO" id="GO:0005737">
    <property type="term" value="C:cytoplasm"/>
    <property type="evidence" value="ECO:0007669"/>
    <property type="project" value="UniProtKB-SubCell"/>
</dbReference>
<dbReference type="GO" id="GO:0016151">
    <property type="term" value="F:nickel cation binding"/>
    <property type="evidence" value="ECO:0007669"/>
    <property type="project" value="InterPro"/>
</dbReference>
<dbReference type="GO" id="GO:0009039">
    <property type="term" value="F:urease activity"/>
    <property type="evidence" value="ECO:0007669"/>
    <property type="project" value="UniProtKB-UniRule"/>
</dbReference>
<dbReference type="GO" id="GO:0043419">
    <property type="term" value="P:urea catabolic process"/>
    <property type="evidence" value="ECO:0007669"/>
    <property type="project" value="UniProtKB-UniRule"/>
</dbReference>
<dbReference type="CDD" id="cd00390">
    <property type="entry name" value="Urease_gamma"/>
    <property type="match status" value="1"/>
</dbReference>
<dbReference type="Gene3D" id="3.30.280.10">
    <property type="entry name" value="Urease, gamma-like subunit"/>
    <property type="match status" value="1"/>
</dbReference>
<dbReference type="HAMAP" id="MF_00739">
    <property type="entry name" value="Urease_gamma"/>
    <property type="match status" value="1"/>
</dbReference>
<dbReference type="InterPro" id="IPR012010">
    <property type="entry name" value="Urease_gamma"/>
</dbReference>
<dbReference type="InterPro" id="IPR002026">
    <property type="entry name" value="Urease_gamma/gamma-beta_su"/>
</dbReference>
<dbReference type="InterPro" id="IPR036463">
    <property type="entry name" value="Urease_gamma_sf"/>
</dbReference>
<dbReference type="InterPro" id="IPR050069">
    <property type="entry name" value="Urease_subunit"/>
</dbReference>
<dbReference type="NCBIfam" id="NF009712">
    <property type="entry name" value="PRK13241.1"/>
    <property type="match status" value="1"/>
</dbReference>
<dbReference type="NCBIfam" id="TIGR00193">
    <property type="entry name" value="urease_gam"/>
    <property type="match status" value="1"/>
</dbReference>
<dbReference type="PANTHER" id="PTHR33569">
    <property type="entry name" value="UREASE"/>
    <property type="match status" value="1"/>
</dbReference>
<dbReference type="PANTHER" id="PTHR33569:SF1">
    <property type="entry name" value="UREASE"/>
    <property type="match status" value="1"/>
</dbReference>
<dbReference type="Pfam" id="PF00547">
    <property type="entry name" value="Urease_gamma"/>
    <property type="match status" value="1"/>
</dbReference>
<dbReference type="PIRSF" id="PIRSF001223">
    <property type="entry name" value="Urease_gamma"/>
    <property type="match status" value="1"/>
</dbReference>
<dbReference type="SUPFAM" id="SSF54111">
    <property type="entry name" value="Urease, gamma-subunit"/>
    <property type="match status" value="1"/>
</dbReference>
<reference key="1">
    <citation type="journal article" date="2012" name="Stand. Genomic Sci.">
        <title>Complete genome sequence of Polynucleobacter necessarius subsp. asymbioticus type strain (QLW-P1DMWA-1(T)).</title>
        <authorList>
            <person name="Meincke L."/>
            <person name="Copeland A."/>
            <person name="Lapidus A."/>
            <person name="Lucas S."/>
            <person name="Berry K.W."/>
            <person name="Del Rio T.G."/>
            <person name="Hammon N."/>
            <person name="Dalin E."/>
            <person name="Tice H."/>
            <person name="Pitluck S."/>
            <person name="Richardson P."/>
            <person name="Bruce D."/>
            <person name="Goodwin L."/>
            <person name="Han C."/>
            <person name="Tapia R."/>
            <person name="Detter J.C."/>
            <person name="Schmutz J."/>
            <person name="Brettin T."/>
            <person name="Larimer F."/>
            <person name="Land M."/>
            <person name="Hauser L."/>
            <person name="Kyrpides N.C."/>
            <person name="Ivanova N."/>
            <person name="Goker M."/>
            <person name="Woyke T."/>
            <person name="Wu Q.L."/>
            <person name="Pockl M."/>
            <person name="Hahn M.W."/>
            <person name="Klenk H.P."/>
        </authorList>
    </citation>
    <scope>NUCLEOTIDE SEQUENCE [LARGE SCALE GENOMIC DNA]</scope>
    <source>
        <strain>DSM 18221 / CIP 109841 / QLW-P1DMWA-1</strain>
    </source>
</reference>
<keyword id="KW-0963">Cytoplasm</keyword>
<keyword id="KW-0378">Hydrolase</keyword>
<keyword id="KW-1185">Reference proteome</keyword>
<feature type="chain" id="PRO_1000083426" description="Urease subunit gamma">
    <location>
        <begin position="1"/>
        <end position="100"/>
    </location>
</feature>
<organism>
    <name type="scientific">Polynucleobacter asymbioticus (strain DSM 18221 / CIP 109841 / QLW-P1DMWA-1)</name>
    <name type="common">Polynucleobacter necessarius subsp. asymbioticus</name>
    <dbReference type="NCBI Taxonomy" id="312153"/>
    <lineage>
        <taxon>Bacteria</taxon>
        <taxon>Pseudomonadati</taxon>
        <taxon>Pseudomonadota</taxon>
        <taxon>Betaproteobacteria</taxon>
        <taxon>Burkholderiales</taxon>
        <taxon>Burkholderiaceae</taxon>
        <taxon>Polynucleobacter</taxon>
    </lineage>
</organism>
<protein>
    <recommendedName>
        <fullName evidence="1">Urease subunit gamma</fullName>
        <ecNumber evidence="1">3.5.1.5</ecNumber>
    </recommendedName>
    <alternativeName>
        <fullName evidence="1">Urea amidohydrolase subunit gamma</fullName>
    </alternativeName>
</protein>
<comment type="catalytic activity">
    <reaction evidence="1">
        <text>urea + 2 H2O + H(+) = hydrogencarbonate + 2 NH4(+)</text>
        <dbReference type="Rhea" id="RHEA:20557"/>
        <dbReference type="ChEBI" id="CHEBI:15377"/>
        <dbReference type="ChEBI" id="CHEBI:15378"/>
        <dbReference type="ChEBI" id="CHEBI:16199"/>
        <dbReference type="ChEBI" id="CHEBI:17544"/>
        <dbReference type="ChEBI" id="CHEBI:28938"/>
        <dbReference type="EC" id="3.5.1.5"/>
    </reaction>
</comment>
<comment type="pathway">
    <text evidence="1">Nitrogen metabolism; urea degradation; CO(2) and NH(3) from urea (urease route): step 1/1.</text>
</comment>
<comment type="subunit">
    <text evidence="1">Heterotrimer of UreA (gamma), UreB (beta) and UreC (alpha) subunits. Three heterotrimers associate to form the active enzyme.</text>
</comment>
<comment type="subcellular location">
    <subcellularLocation>
        <location evidence="1">Cytoplasm</location>
    </subcellularLocation>
</comment>
<comment type="similarity">
    <text evidence="1">Belongs to the urease gamma subunit family.</text>
</comment>
<sequence>MELTPREKDKLLIFTAALLAERRKARGLKLNYPESVALISAAIMEGARDGKTVAQLMHEGQTILGREDVMEGVPEMIQDIQIEATFPDGTKLVTVHNPIV</sequence>
<accession>A4SY47</accession>
<gene>
    <name evidence="1" type="primary">ureA</name>
    <name type="ordered locus">Pnuc_1196</name>
</gene>
<proteinExistence type="inferred from homology"/>
<evidence type="ECO:0000255" key="1">
    <source>
        <dbReference type="HAMAP-Rule" id="MF_00739"/>
    </source>
</evidence>
<name>URE3_POLAQ</name>